<dbReference type="EMBL" id="U57043">
    <property type="protein sequence ID" value="AAC50635.1"/>
    <property type="molecule type" value="Genomic_DNA"/>
</dbReference>
<dbReference type="PIR" id="G00014">
    <property type="entry name" value="G00014"/>
</dbReference>
<dbReference type="SMR" id="P68256"/>
<dbReference type="Proteomes" id="UP000504640">
    <property type="component" value="Unplaced"/>
</dbReference>
<dbReference type="GO" id="GO:0072562">
    <property type="term" value="C:blood microparticle"/>
    <property type="evidence" value="ECO:0007669"/>
    <property type="project" value="TreeGrafter"/>
</dbReference>
<dbReference type="GO" id="GO:0031838">
    <property type="term" value="C:haptoglobin-hemoglobin complex"/>
    <property type="evidence" value="ECO:0007669"/>
    <property type="project" value="TreeGrafter"/>
</dbReference>
<dbReference type="GO" id="GO:0005833">
    <property type="term" value="C:hemoglobin complex"/>
    <property type="evidence" value="ECO:0007669"/>
    <property type="project" value="InterPro"/>
</dbReference>
<dbReference type="GO" id="GO:0031720">
    <property type="term" value="F:haptoglobin binding"/>
    <property type="evidence" value="ECO:0007669"/>
    <property type="project" value="TreeGrafter"/>
</dbReference>
<dbReference type="GO" id="GO:0020037">
    <property type="term" value="F:heme binding"/>
    <property type="evidence" value="ECO:0007669"/>
    <property type="project" value="InterPro"/>
</dbReference>
<dbReference type="GO" id="GO:0031721">
    <property type="term" value="F:hemoglobin alpha binding"/>
    <property type="evidence" value="ECO:0007669"/>
    <property type="project" value="TreeGrafter"/>
</dbReference>
<dbReference type="GO" id="GO:0046872">
    <property type="term" value="F:metal ion binding"/>
    <property type="evidence" value="ECO:0007669"/>
    <property type="project" value="UniProtKB-KW"/>
</dbReference>
<dbReference type="GO" id="GO:0043177">
    <property type="term" value="F:organic acid binding"/>
    <property type="evidence" value="ECO:0007669"/>
    <property type="project" value="TreeGrafter"/>
</dbReference>
<dbReference type="GO" id="GO:0019825">
    <property type="term" value="F:oxygen binding"/>
    <property type="evidence" value="ECO:0007669"/>
    <property type="project" value="InterPro"/>
</dbReference>
<dbReference type="GO" id="GO:0005344">
    <property type="term" value="F:oxygen carrier activity"/>
    <property type="evidence" value="ECO:0007669"/>
    <property type="project" value="UniProtKB-KW"/>
</dbReference>
<dbReference type="GO" id="GO:0004601">
    <property type="term" value="F:peroxidase activity"/>
    <property type="evidence" value="ECO:0007669"/>
    <property type="project" value="TreeGrafter"/>
</dbReference>
<dbReference type="GO" id="GO:0042744">
    <property type="term" value="P:hydrogen peroxide catabolic process"/>
    <property type="evidence" value="ECO:0007669"/>
    <property type="project" value="TreeGrafter"/>
</dbReference>
<dbReference type="CDD" id="cd08925">
    <property type="entry name" value="Hb-beta-like"/>
    <property type="match status" value="1"/>
</dbReference>
<dbReference type="FunFam" id="1.10.490.10:FF:000001">
    <property type="entry name" value="Hemoglobin subunit beta"/>
    <property type="match status" value="1"/>
</dbReference>
<dbReference type="Gene3D" id="1.10.490.10">
    <property type="entry name" value="Globins"/>
    <property type="match status" value="1"/>
</dbReference>
<dbReference type="InterPro" id="IPR000971">
    <property type="entry name" value="Globin"/>
</dbReference>
<dbReference type="InterPro" id="IPR009050">
    <property type="entry name" value="Globin-like_sf"/>
</dbReference>
<dbReference type="InterPro" id="IPR012292">
    <property type="entry name" value="Globin/Proto"/>
</dbReference>
<dbReference type="InterPro" id="IPR002337">
    <property type="entry name" value="Hemoglobin_b"/>
</dbReference>
<dbReference type="InterPro" id="IPR050056">
    <property type="entry name" value="Hemoglobin_oxygen_transport"/>
</dbReference>
<dbReference type="PANTHER" id="PTHR11442">
    <property type="entry name" value="HEMOGLOBIN FAMILY MEMBER"/>
    <property type="match status" value="1"/>
</dbReference>
<dbReference type="PANTHER" id="PTHR11442:SF52">
    <property type="entry name" value="HEMOGLOBIN SUBUNIT GAMMA-1"/>
    <property type="match status" value="1"/>
</dbReference>
<dbReference type="Pfam" id="PF00042">
    <property type="entry name" value="Globin"/>
    <property type="match status" value="1"/>
</dbReference>
<dbReference type="PRINTS" id="PR00814">
    <property type="entry name" value="BETAHAEM"/>
</dbReference>
<dbReference type="SUPFAM" id="SSF46458">
    <property type="entry name" value="Globin-like"/>
    <property type="match status" value="1"/>
</dbReference>
<dbReference type="PROSITE" id="PS01033">
    <property type="entry name" value="GLOBIN"/>
    <property type="match status" value="1"/>
</dbReference>
<feature type="chain" id="PRO_0000053244" description="Hemoglobin subunit gamma-1">
    <location>
        <begin position="1"/>
        <end position="147"/>
    </location>
</feature>
<feature type="domain" description="Globin" evidence="3">
    <location>
        <begin position="3"/>
        <end position="147"/>
    </location>
</feature>
<feature type="binding site" description="distal binding residue" evidence="3">
    <location>
        <position position="64"/>
    </location>
    <ligand>
        <name>heme b</name>
        <dbReference type="ChEBI" id="CHEBI:60344"/>
    </ligand>
    <ligandPart>
        <name>Fe</name>
        <dbReference type="ChEBI" id="CHEBI:18248"/>
    </ligandPart>
</feature>
<feature type="binding site" description="proximal binding residue" evidence="3">
    <location>
        <position position="93"/>
    </location>
    <ligand>
        <name>heme b</name>
        <dbReference type="ChEBI" id="CHEBI:60344"/>
    </ligand>
    <ligandPart>
        <name>Fe</name>
        <dbReference type="ChEBI" id="CHEBI:18248"/>
    </ligandPart>
</feature>
<feature type="modified residue" description="Phosphothreonine" evidence="1">
    <location>
        <position position="13"/>
    </location>
</feature>
<feature type="modified residue" description="Phosphoserine" evidence="2">
    <location>
        <position position="45"/>
    </location>
</feature>
<feature type="modified residue" description="Phosphoserine" evidence="2">
    <location>
        <position position="51"/>
    </location>
</feature>
<feature type="modified residue" description="Phosphoserine" evidence="2">
    <location>
        <position position="53"/>
    </location>
</feature>
<feature type="modified residue" description="N6-acetyllysine" evidence="1">
    <location>
        <position position="60"/>
    </location>
</feature>
<feature type="modified residue" description="N6-acetyllysine" evidence="1">
    <location>
        <position position="83"/>
    </location>
</feature>
<feature type="modified residue" description="S-nitrosocysteine" evidence="1">
    <location>
        <position position="94"/>
    </location>
</feature>
<feature type="modified residue" description="Phosphoserine" evidence="2">
    <location>
        <position position="140"/>
    </location>
</feature>
<gene>
    <name type="primary">HBG1</name>
</gene>
<evidence type="ECO:0000250" key="1">
    <source>
        <dbReference type="UniProtKB" id="P68871"/>
    </source>
</evidence>
<evidence type="ECO:0000250" key="2">
    <source>
        <dbReference type="UniProtKB" id="P69891"/>
    </source>
</evidence>
<evidence type="ECO:0000255" key="3">
    <source>
        <dbReference type="PROSITE-ProRule" id="PRU00238"/>
    </source>
</evidence>
<sequence length="147" mass="15922">MSNFTAEDKAAITSLWAKVNVEDAGGETLGRLLVVYPWTQRFFDSFGSLSSPSAIMGNPKVKAHGAKVLTSLGEAIKNLDDLKGTFGQLSELHCDKLHVDPENFRLLGNVLVTVLAVHHGKEFTPEVQASWQKMVAGVASALGSRYH</sequence>
<protein>
    <recommendedName>
        <fullName>Hemoglobin subunit gamma-1</fullName>
    </recommendedName>
    <alternativeName>
        <fullName>Gamma-1-globin</fullName>
    </alternativeName>
    <alternativeName>
        <fullName>Hemoglobin gamma-1 chain</fullName>
    </alternativeName>
</protein>
<comment type="function">
    <text evidence="2">Gamma chains make up the fetal hemoglobin F, in combination with alpha chains.</text>
</comment>
<comment type="subunit">
    <text evidence="2">Heterotetramer of two alpha chains and two gamma chains in fetal hemoglobin (Hb F).</text>
</comment>
<comment type="tissue specificity">
    <text>Red blood cells.</text>
</comment>
<comment type="similarity">
    <text evidence="3">Belongs to the globin family.</text>
</comment>
<name>HBG1_SAPAP</name>
<accession>P68256</accession>
<accession>Q28225</accession>
<accession>Q29434</accession>
<reference key="1">
    <citation type="journal article" date="1996" name="Proc. Natl. Acad. Sci. U.S.A.">
        <title>Reduction of two functional gamma-globin genes to one: an evolutionary trend in New World monkeys (infraorder Platyrrhini).</title>
        <authorList>
            <person name="Chiu C.-H."/>
            <person name="Schneider H."/>
            <person name="Schneider M.P.C."/>
            <person name="Sampaio I."/>
            <person name="Meireles C.M."/>
            <person name="Slightom J.L."/>
            <person name="Gumucio D.L."/>
            <person name="Goodman M."/>
        </authorList>
    </citation>
    <scope>NUCLEOTIDE SEQUENCE [GENOMIC DNA]</scope>
</reference>
<keyword id="KW-0007">Acetylation</keyword>
<keyword id="KW-0349">Heme</keyword>
<keyword id="KW-0408">Iron</keyword>
<keyword id="KW-0479">Metal-binding</keyword>
<keyword id="KW-0561">Oxygen transport</keyword>
<keyword id="KW-0597">Phosphoprotein</keyword>
<keyword id="KW-1185">Reference proteome</keyword>
<keyword id="KW-0702">S-nitrosylation</keyword>
<keyword id="KW-0813">Transport</keyword>
<proteinExistence type="evidence at transcript level"/>
<organism>
    <name type="scientific">Sapajus apella</name>
    <name type="common">Brown-capped capuchin</name>
    <name type="synonym">Cebus apella</name>
    <dbReference type="NCBI Taxonomy" id="9515"/>
    <lineage>
        <taxon>Eukaryota</taxon>
        <taxon>Metazoa</taxon>
        <taxon>Chordata</taxon>
        <taxon>Craniata</taxon>
        <taxon>Vertebrata</taxon>
        <taxon>Euteleostomi</taxon>
        <taxon>Mammalia</taxon>
        <taxon>Eutheria</taxon>
        <taxon>Euarchontoglires</taxon>
        <taxon>Primates</taxon>
        <taxon>Haplorrhini</taxon>
        <taxon>Platyrrhini</taxon>
        <taxon>Cebidae</taxon>
        <taxon>Cebinae</taxon>
        <taxon>Sapajus</taxon>
    </lineage>
</organism>